<organism>
    <name type="scientific">Geobacillus sp. (strain WCH70)</name>
    <dbReference type="NCBI Taxonomy" id="471223"/>
    <lineage>
        <taxon>Bacteria</taxon>
        <taxon>Bacillati</taxon>
        <taxon>Bacillota</taxon>
        <taxon>Bacilli</taxon>
        <taxon>Bacillales</taxon>
        <taxon>Anoxybacillaceae</taxon>
        <taxon>Geobacillus</taxon>
    </lineage>
</organism>
<protein>
    <recommendedName>
        <fullName evidence="1">Putative membrane protein insertion efficiency factor</fullName>
    </recommendedName>
</protein>
<comment type="function">
    <text evidence="1">Could be involved in insertion of integral membrane proteins into the membrane.</text>
</comment>
<comment type="subcellular location">
    <subcellularLocation>
        <location evidence="1">Cell membrane</location>
        <topology evidence="1">Peripheral membrane protein</topology>
        <orientation evidence="1">Cytoplasmic side</orientation>
    </subcellularLocation>
</comment>
<comment type="similarity">
    <text evidence="1">Belongs to the UPF0161 family.</text>
</comment>
<accession>C5D6T9</accession>
<evidence type="ECO:0000255" key="1">
    <source>
        <dbReference type="HAMAP-Rule" id="MF_00386"/>
    </source>
</evidence>
<proteinExistence type="inferred from homology"/>
<gene>
    <name type="ordered locus">GWCH70_2790</name>
</gene>
<sequence>MKKLLISFIRFYQIFISPLKPPTCRFYPTCSHYGLEAVKRFGAIKGGWLTIKRILKCHPFHPGGFDPVPEKQENGKS</sequence>
<reference key="1">
    <citation type="submission" date="2009-06" db="EMBL/GenBank/DDBJ databases">
        <title>Complete sequence of chromosome of Geopacillus sp. WCH70.</title>
        <authorList>
            <consortium name="US DOE Joint Genome Institute"/>
            <person name="Lucas S."/>
            <person name="Copeland A."/>
            <person name="Lapidus A."/>
            <person name="Glavina del Rio T."/>
            <person name="Dalin E."/>
            <person name="Tice H."/>
            <person name="Bruce D."/>
            <person name="Goodwin L."/>
            <person name="Pitluck S."/>
            <person name="Chertkov O."/>
            <person name="Brettin T."/>
            <person name="Detter J.C."/>
            <person name="Han C."/>
            <person name="Larimer F."/>
            <person name="Land M."/>
            <person name="Hauser L."/>
            <person name="Kyrpides N."/>
            <person name="Mikhailova N."/>
            <person name="Brumm P."/>
            <person name="Mead D.A."/>
            <person name="Richardson P."/>
        </authorList>
    </citation>
    <scope>NUCLEOTIDE SEQUENCE [LARGE SCALE GENOMIC DNA]</scope>
    <source>
        <strain>WCH70</strain>
    </source>
</reference>
<dbReference type="EMBL" id="CP001638">
    <property type="protein sequence ID" value="ACS25478.1"/>
    <property type="molecule type" value="Genomic_DNA"/>
</dbReference>
<dbReference type="STRING" id="471223.GWCH70_2790"/>
<dbReference type="KEGG" id="gwc:GWCH70_2790"/>
<dbReference type="eggNOG" id="COG0759">
    <property type="taxonomic scope" value="Bacteria"/>
</dbReference>
<dbReference type="HOGENOM" id="CLU_144811_6_0_9"/>
<dbReference type="GO" id="GO:0005886">
    <property type="term" value="C:plasma membrane"/>
    <property type="evidence" value="ECO:0007669"/>
    <property type="project" value="UniProtKB-SubCell"/>
</dbReference>
<dbReference type="HAMAP" id="MF_00386">
    <property type="entry name" value="UPF0161_YidD"/>
    <property type="match status" value="1"/>
</dbReference>
<dbReference type="InterPro" id="IPR002696">
    <property type="entry name" value="Membr_insert_effic_factor_YidD"/>
</dbReference>
<dbReference type="NCBIfam" id="TIGR00278">
    <property type="entry name" value="membrane protein insertion efficiency factor YidD"/>
    <property type="match status" value="1"/>
</dbReference>
<dbReference type="PANTHER" id="PTHR33383">
    <property type="entry name" value="MEMBRANE PROTEIN INSERTION EFFICIENCY FACTOR-RELATED"/>
    <property type="match status" value="1"/>
</dbReference>
<dbReference type="PANTHER" id="PTHR33383:SF1">
    <property type="entry name" value="MEMBRANE PROTEIN INSERTION EFFICIENCY FACTOR-RELATED"/>
    <property type="match status" value="1"/>
</dbReference>
<dbReference type="Pfam" id="PF01809">
    <property type="entry name" value="YidD"/>
    <property type="match status" value="1"/>
</dbReference>
<dbReference type="SMART" id="SM01234">
    <property type="entry name" value="Haemolytic"/>
    <property type="match status" value="1"/>
</dbReference>
<feature type="chain" id="PRO_1000205785" description="Putative membrane protein insertion efficiency factor">
    <location>
        <begin position="1"/>
        <end position="77"/>
    </location>
</feature>
<keyword id="KW-1003">Cell membrane</keyword>
<keyword id="KW-0472">Membrane</keyword>
<name>YIDD_GEOSW</name>